<keyword id="KW-0028">Amino-acid biosynthesis</keyword>
<keyword id="KW-0963">Cytoplasm</keyword>
<keyword id="KW-0554">One-carbon metabolism</keyword>
<keyword id="KW-0663">Pyridoxal phosphate</keyword>
<keyword id="KW-1185">Reference proteome</keyword>
<keyword id="KW-0808">Transferase</keyword>
<proteinExistence type="inferred from homology"/>
<name>GLYA_STRR6</name>
<protein>
    <recommendedName>
        <fullName evidence="1">Serine hydroxymethyltransferase</fullName>
        <shortName evidence="1">SHMT</shortName>
        <shortName evidence="1">Serine methylase</shortName>
        <ecNumber evidence="1">2.1.2.1</ecNumber>
    </recommendedName>
</protein>
<reference key="1">
    <citation type="journal article" date="2001" name="J. Bacteriol.">
        <title>Genome of the bacterium Streptococcus pneumoniae strain R6.</title>
        <authorList>
            <person name="Hoskins J."/>
            <person name="Alborn W.E. Jr."/>
            <person name="Arnold J."/>
            <person name="Blaszczak L.C."/>
            <person name="Burgett S."/>
            <person name="DeHoff B.S."/>
            <person name="Estrem S.T."/>
            <person name="Fritz L."/>
            <person name="Fu D.-J."/>
            <person name="Fuller W."/>
            <person name="Geringer C."/>
            <person name="Gilmour R."/>
            <person name="Glass J.S."/>
            <person name="Khoja H."/>
            <person name="Kraft A.R."/>
            <person name="Lagace R.E."/>
            <person name="LeBlanc D.J."/>
            <person name="Lee L.N."/>
            <person name="Lefkowitz E.J."/>
            <person name="Lu J."/>
            <person name="Matsushima P."/>
            <person name="McAhren S.M."/>
            <person name="McHenney M."/>
            <person name="McLeaster K."/>
            <person name="Mundy C.W."/>
            <person name="Nicas T.I."/>
            <person name="Norris F.H."/>
            <person name="O'Gara M."/>
            <person name="Peery R.B."/>
            <person name="Robertson G.T."/>
            <person name="Rockey P."/>
            <person name="Sun P.-M."/>
            <person name="Winkler M.E."/>
            <person name="Yang Y."/>
            <person name="Young-Bellido M."/>
            <person name="Zhao G."/>
            <person name="Zook C.A."/>
            <person name="Baltz R.H."/>
            <person name="Jaskunas S.R."/>
            <person name="Rosteck P.R. Jr."/>
            <person name="Skatrud P.L."/>
            <person name="Glass J.I."/>
        </authorList>
    </citation>
    <scope>NUCLEOTIDE SEQUENCE [LARGE SCALE GENOMIC DNA]</scope>
    <source>
        <strain>ATCC BAA-255 / R6</strain>
    </source>
</reference>
<gene>
    <name evidence="1" type="primary">glyA</name>
    <name type="ordered locus">spr0928</name>
</gene>
<evidence type="ECO:0000255" key="1">
    <source>
        <dbReference type="HAMAP-Rule" id="MF_00051"/>
    </source>
</evidence>
<dbReference type="EC" id="2.1.2.1" evidence="1"/>
<dbReference type="EMBL" id="AE007317">
    <property type="protein sequence ID" value="AAK99732.1"/>
    <property type="molecule type" value="Genomic_DNA"/>
</dbReference>
<dbReference type="PIR" id="H97987">
    <property type="entry name" value="H97987"/>
</dbReference>
<dbReference type="RefSeq" id="NP_358522.1">
    <property type="nucleotide sequence ID" value="NC_003098.1"/>
</dbReference>
<dbReference type="RefSeq" id="WP_000575515.1">
    <property type="nucleotide sequence ID" value="NC_003098.1"/>
</dbReference>
<dbReference type="SMR" id="Q8DPZ0"/>
<dbReference type="STRING" id="171101.spr0928"/>
<dbReference type="KEGG" id="spr:spr0928"/>
<dbReference type="PATRIC" id="fig|171101.6.peg.1015"/>
<dbReference type="eggNOG" id="COG0112">
    <property type="taxonomic scope" value="Bacteria"/>
</dbReference>
<dbReference type="HOGENOM" id="CLU_022477_2_1_9"/>
<dbReference type="UniPathway" id="UPA00193"/>
<dbReference type="UniPathway" id="UPA00288">
    <property type="reaction ID" value="UER01023"/>
</dbReference>
<dbReference type="Proteomes" id="UP000000586">
    <property type="component" value="Chromosome"/>
</dbReference>
<dbReference type="GO" id="GO:0005737">
    <property type="term" value="C:cytoplasm"/>
    <property type="evidence" value="ECO:0000318"/>
    <property type="project" value="GO_Central"/>
</dbReference>
<dbReference type="GO" id="GO:0005829">
    <property type="term" value="C:cytosol"/>
    <property type="evidence" value="ECO:0000318"/>
    <property type="project" value="GO_Central"/>
</dbReference>
<dbReference type="GO" id="GO:0004372">
    <property type="term" value="F:glycine hydroxymethyltransferase activity"/>
    <property type="evidence" value="ECO:0000318"/>
    <property type="project" value="GO_Central"/>
</dbReference>
<dbReference type="GO" id="GO:0030170">
    <property type="term" value="F:pyridoxal phosphate binding"/>
    <property type="evidence" value="ECO:0000318"/>
    <property type="project" value="GO_Central"/>
</dbReference>
<dbReference type="GO" id="GO:0019264">
    <property type="term" value="P:glycine biosynthetic process from serine"/>
    <property type="evidence" value="ECO:0000318"/>
    <property type="project" value="GO_Central"/>
</dbReference>
<dbReference type="GO" id="GO:0035999">
    <property type="term" value="P:tetrahydrofolate interconversion"/>
    <property type="evidence" value="ECO:0007669"/>
    <property type="project" value="UniProtKB-UniRule"/>
</dbReference>
<dbReference type="GO" id="GO:0046653">
    <property type="term" value="P:tetrahydrofolate metabolic process"/>
    <property type="evidence" value="ECO:0000318"/>
    <property type="project" value="GO_Central"/>
</dbReference>
<dbReference type="CDD" id="cd00378">
    <property type="entry name" value="SHMT"/>
    <property type="match status" value="1"/>
</dbReference>
<dbReference type="FunFam" id="3.40.640.10:FF:000001">
    <property type="entry name" value="Serine hydroxymethyltransferase"/>
    <property type="match status" value="1"/>
</dbReference>
<dbReference type="FunFam" id="3.90.1150.10:FF:000072">
    <property type="entry name" value="Serine hydroxymethyltransferase"/>
    <property type="match status" value="1"/>
</dbReference>
<dbReference type="Gene3D" id="3.90.1150.10">
    <property type="entry name" value="Aspartate Aminotransferase, domain 1"/>
    <property type="match status" value="1"/>
</dbReference>
<dbReference type="Gene3D" id="3.40.640.10">
    <property type="entry name" value="Type I PLP-dependent aspartate aminotransferase-like (Major domain)"/>
    <property type="match status" value="1"/>
</dbReference>
<dbReference type="HAMAP" id="MF_00051">
    <property type="entry name" value="SHMT"/>
    <property type="match status" value="1"/>
</dbReference>
<dbReference type="InterPro" id="IPR015424">
    <property type="entry name" value="PyrdxlP-dep_Trfase"/>
</dbReference>
<dbReference type="InterPro" id="IPR015421">
    <property type="entry name" value="PyrdxlP-dep_Trfase_major"/>
</dbReference>
<dbReference type="InterPro" id="IPR015422">
    <property type="entry name" value="PyrdxlP-dep_Trfase_small"/>
</dbReference>
<dbReference type="InterPro" id="IPR001085">
    <property type="entry name" value="Ser_HO-MeTrfase"/>
</dbReference>
<dbReference type="InterPro" id="IPR049943">
    <property type="entry name" value="Ser_HO-MeTrfase-like"/>
</dbReference>
<dbReference type="InterPro" id="IPR019798">
    <property type="entry name" value="Ser_HO-MeTrfase_PLP_BS"/>
</dbReference>
<dbReference type="InterPro" id="IPR039429">
    <property type="entry name" value="SHMT-like_dom"/>
</dbReference>
<dbReference type="NCBIfam" id="NF000586">
    <property type="entry name" value="PRK00011.1"/>
    <property type="match status" value="1"/>
</dbReference>
<dbReference type="PANTHER" id="PTHR11680">
    <property type="entry name" value="SERINE HYDROXYMETHYLTRANSFERASE"/>
    <property type="match status" value="1"/>
</dbReference>
<dbReference type="PANTHER" id="PTHR11680:SF35">
    <property type="entry name" value="SERINE HYDROXYMETHYLTRANSFERASE 1"/>
    <property type="match status" value="1"/>
</dbReference>
<dbReference type="Pfam" id="PF00464">
    <property type="entry name" value="SHMT"/>
    <property type="match status" value="1"/>
</dbReference>
<dbReference type="PIRSF" id="PIRSF000412">
    <property type="entry name" value="SHMT"/>
    <property type="match status" value="1"/>
</dbReference>
<dbReference type="SUPFAM" id="SSF53383">
    <property type="entry name" value="PLP-dependent transferases"/>
    <property type="match status" value="1"/>
</dbReference>
<dbReference type="PROSITE" id="PS00096">
    <property type="entry name" value="SHMT"/>
    <property type="match status" value="1"/>
</dbReference>
<accession>Q8DPZ0</accession>
<sequence length="418" mass="45256">MIFDKDDFKAYDADLWNAIAKEEERQQNNIELIASENVVSKAVMAAQGSILTNKYAEGYPGRRYYGGTDVVDVVETLAIERAKEIFGAKFANVQPHSGSQANCAAYMSLIEPGDTVMGMDLAAGGHLTHGAPVSFSGQTYNFLSYSVDPETELLDFDAILKQAQEVKPKLIVAGASAYSQIIDFSKFREIADAVGAKLMVDMAHIAGLVAAGLHPSPVPYAHITTTTTHKTLRGPRGGLILTNDEELAKKINSAIFPGIQGGPLEHVVAAKAVSFKEVLDPAFKEYAANVIKNSKAMADVFLQDPDFRIISGGTENHLFLVDVTKVVENGKVAQNLLDEVNITLNKNSIPYETLSPFKTSGIRIGAAAITARGFGEEESRKVAELIIKTLKNSENEAVLEEVRSAVKELTDAFPLYED</sequence>
<comment type="function">
    <text evidence="1">Catalyzes the reversible interconversion of serine and glycine with tetrahydrofolate (THF) serving as the one-carbon carrier. This reaction serves as the major source of one-carbon groups required for the biosynthesis of purines, thymidylate, methionine, and other important biomolecules. Also exhibits THF-independent aldolase activity toward beta-hydroxyamino acids, producing glycine and aldehydes, via a retro-aldol mechanism.</text>
</comment>
<comment type="catalytic activity">
    <reaction evidence="1">
        <text>(6R)-5,10-methylene-5,6,7,8-tetrahydrofolate + glycine + H2O = (6S)-5,6,7,8-tetrahydrofolate + L-serine</text>
        <dbReference type="Rhea" id="RHEA:15481"/>
        <dbReference type="ChEBI" id="CHEBI:15377"/>
        <dbReference type="ChEBI" id="CHEBI:15636"/>
        <dbReference type="ChEBI" id="CHEBI:33384"/>
        <dbReference type="ChEBI" id="CHEBI:57305"/>
        <dbReference type="ChEBI" id="CHEBI:57453"/>
        <dbReference type="EC" id="2.1.2.1"/>
    </reaction>
</comment>
<comment type="cofactor">
    <cofactor evidence="1">
        <name>pyridoxal 5'-phosphate</name>
        <dbReference type="ChEBI" id="CHEBI:597326"/>
    </cofactor>
</comment>
<comment type="pathway">
    <text evidence="1">One-carbon metabolism; tetrahydrofolate interconversion.</text>
</comment>
<comment type="pathway">
    <text evidence="1">Amino-acid biosynthesis; glycine biosynthesis; glycine from L-serine: step 1/1.</text>
</comment>
<comment type="subunit">
    <text evidence="1">Homodimer.</text>
</comment>
<comment type="subcellular location">
    <subcellularLocation>
        <location evidence="1">Cytoplasm</location>
    </subcellularLocation>
</comment>
<comment type="similarity">
    <text evidence="1">Belongs to the SHMT family.</text>
</comment>
<organism>
    <name type="scientific">Streptococcus pneumoniae (strain ATCC BAA-255 / R6)</name>
    <dbReference type="NCBI Taxonomy" id="171101"/>
    <lineage>
        <taxon>Bacteria</taxon>
        <taxon>Bacillati</taxon>
        <taxon>Bacillota</taxon>
        <taxon>Bacilli</taxon>
        <taxon>Lactobacillales</taxon>
        <taxon>Streptococcaceae</taxon>
        <taxon>Streptococcus</taxon>
    </lineage>
</organism>
<feature type="chain" id="PRO_0000113675" description="Serine hydroxymethyltransferase">
    <location>
        <begin position="1"/>
        <end position="418"/>
    </location>
</feature>
<feature type="binding site" evidence="1">
    <location>
        <position position="121"/>
    </location>
    <ligand>
        <name>(6S)-5,6,7,8-tetrahydrofolate</name>
        <dbReference type="ChEBI" id="CHEBI:57453"/>
    </ligand>
</feature>
<feature type="binding site" evidence="1">
    <location>
        <begin position="125"/>
        <end position="127"/>
    </location>
    <ligand>
        <name>(6S)-5,6,7,8-tetrahydrofolate</name>
        <dbReference type="ChEBI" id="CHEBI:57453"/>
    </ligand>
</feature>
<feature type="binding site" evidence="1">
    <location>
        <position position="246"/>
    </location>
    <ligand>
        <name>(6S)-5,6,7,8-tetrahydrofolate</name>
        <dbReference type="ChEBI" id="CHEBI:57453"/>
    </ligand>
</feature>
<feature type="binding site" evidence="1">
    <location>
        <begin position="355"/>
        <end position="357"/>
    </location>
    <ligand>
        <name>(6S)-5,6,7,8-tetrahydrofolate</name>
        <dbReference type="ChEBI" id="CHEBI:57453"/>
    </ligand>
</feature>
<feature type="site" description="Plays an important role in substrate specificity" evidence="1">
    <location>
        <position position="229"/>
    </location>
</feature>
<feature type="modified residue" description="N6-(pyridoxal phosphate)lysine" evidence="1">
    <location>
        <position position="230"/>
    </location>
</feature>